<organism>
    <name type="scientific">Rhodococcus jostii (strain RHA1)</name>
    <dbReference type="NCBI Taxonomy" id="101510"/>
    <lineage>
        <taxon>Bacteria</taxon>
        <taxon>Bacillati</taxon>
        <taxon>Actinomycetota</taxon>
        <taxon>Actinomycetes</taxon>
        <taxon>Mycobacteriales</taxon>
        <taxon>Nocardiaceae</taxon>
        <taxon>Rhodococcus</taxon>
    </lineage>
</organism>
<gene>
    <name type="ordered locus">RHA1_ro10112</name>
</gene>
<sequence length="336" mass="35914">MTRLYIQDVTLRDGMHAIRHRLAPAQLRTIAAALDAAGVDAIEVSHGDGLAGSSLTYGPGSNTDWEWITAAADVVTNAKLTTLLLPGIGTIAELEHAHTLGVRSVRVATHATEADIAVQHISRARELGMDVSGFLMMSHMAAPAELARQAKLMEQAGAHCVYVTDSGGRLTMSDVRDRVRAYRDVLDEATQIGIHAHENLSLSVANSVVAVEEGVTRVDASLAGQGAGAGNCPIEAFIAVATLQGWEHGCDLFALQDSADDLVRPLQDRPVQVDRETLTLGYAGVYSSFLRHAERAAIEYGLDTRRILLEVGKRELVGGQEDMIVDVALDLLSSHA</sequence>
<evidence type="ECO:0000255" key="1">
    <source>
        <dbReference type="HAMAP-Rule" id="MF_01656"/>
    </source>
</evidence>
<keyword id="KW-0058">Aromatic hydrocarbons catabolism</keyword>
<keyword id="KW-0456">Lyase</keyword>
<keyword id="KW-0464">Manganese</keyword>
<keyword id="KW-0479">Metal-binding</keyword>
<keyword id="KW-0614">Plasmid</keyword>
<reference key="1">
    <citation type="journal article" date="2006" name="Proc. Natl. Acad. Sci. U.S.A.">
        <title>The complete genome of Rhodococcus sp. RHA1 provides insights into a catabolic powerhouse.</title>
        <authorList>
            <person name="McLeod M.P."/>
            <person name="Warren R.L."/>
            <person name="Hsiao W.W.L."/>
            <person name="Araki N."/>
            <person name="Myhre M."/>
            <person name="Fernandes C."/>
            <person name="Miyazawa D."/>
            <person name="Wong W."/>
            <person name="Lillquist A.L."/>
            <person name="Wang D."/>
            <person name="Dosanjh M."/>
            <person name="Hara H."/>
            <person name="Petrescu A."/>
            <person name="Morin R.D."/>
            <person name="Yang G."/>
            <person name="Stott J.M."/>
            <person name="Schein J.E."/>
            <person name="Shin H."/>
            <person name="Smailus D."/>
            <person name="Siddiqui A.S."/>
            <person name="Marra M.A."/>
            <person name="Jones S.J.M."/>
            <person name="Holt R."/>
            <person name="Brinkman F.S.L."/>
            <person name="Miyauchi K."/>
            <person name="Fukuda M."/>
            <person name="Davies J.E."/>
            <person name="Mohn W.W."/>
            <person name="Eltis L.D."/>
        </authorList>
    </citation>
    <scope>NUCLEOTIDE SEQUENCE [LARGE SCALE GENOMIC DNA]</scope>
    <source>
        <strain>RHA1</strain>
    </source>
</reference>
<feature type="chain" id="PRO_0000387901" description="4-hydroxy-2-oxovalerate aldolase 7">
    <location>
        <begin position="1"/>
        <end position="336"/>
    </location>
</feature>
<feature type="domain" description="Pyruvate carboxyltransferase" evidence="1">
    <location>
        <begin position="4"/>
        <end position="256"/>
    </location>
</feature>
<feature type="active site" description="Proton acceptor" evidence="1">
    <location>
        <position position="16"/>
    </location>
</feature>
<feature type="binding site" evidence="1">
    <location>
        <begin position="12"/>
        <end position="13"/>
    </location>
    <ligand>
        <name>substrate</name>
    </ligand>
</feature>
<feature type="binding site" evidence="1">
    <location>
        <position position="13"/>
    </location>
    <ligand>
        <name>Mn(2+)</name>
        <dbReference type="ChEBI" id="CHEBI:29035"/>
    </ligand>
</feature>
<feature type="binding site" evidence="1">
    <location>
        <position position="166"/>
    </location>
    <ligand>
        <name>substrate</name>
    </ligand>
</feature>
<feature type="binding site" evidence="1">
    <location>
        <position position="195"/>
    </location>
    <ligand>
        <name>Mn(2+)</name>
        <dbReference type="ChEBI" id="CHEBI:29035"/>
    </ligand>
</feature>
<feature type="binding site" evidence="1">
    <location>
        <position position="195"/>
    </location>
    <ligand>
        <name>substrate</name>
    </ligand>
</feature>
<feature type="binding site" evidence="1">
    <location>
        <position position="197"/>
    </location>
    <ligand>
        <name>Mn(2+)</name>
        <dbReference type="ChEBI" id="CHEBI:29035"/>
    </ligand>
</feature>
<feature type="binding site" evidence="1">
    <location>
        <position position="286"/>
    </location>
    <ligand>
        <name>substrate</name>
    </ligand>
</feature>
<feature type="site" description="Transition state stabilizer" evidence="1">
    <location>
        <position position="12"/>
    </location>
</feature>
<geneLocation type="plasmid">
    <name>pRHL2</name>
</geneLocation>
<name>HOA7_RHOJR</name>
<accession>Q0RWN1</accession>
<dbReference type="EC" id="4.1.3.39" evidence="1"/>
<dbReference type="EMBL" id="CP000433">
    <property type="protein sequence ID" value="ABH00305.1"/>
    <property type="molecule type" value="Genomic_DNA"/>
</dbReference>
<dbReference type="RefSeq" id="WP_011599975.1">
    <property type="nucleotide sequence ID" value="NC_008270.1"/>
</dbReference>
<dbReference type="SMR" id="Q0RWN1"/>
<dbReference type="KEGG" id="rha:RHA1_ro10112"/>
<dbReference type="HOGENOM" id="CLU_049173_0_0_11"/>
<dbReference type="OrthoDB" id="9803573at2"/>
<dbReference type="Proteomes" id="UP000008710">
    <property type="component" value="Plasmid pRHL2"/>
</dbReference>
<dbReference type="GO" id="GO:0003852">
    <property type="term" value="F:2-isopropylmalate synthase activity"/>
    <property type="evidence" value="ECO:0007669"/>
    <property type="project" value="TreeGrafter"/>
</dbReference>
<dbReference type="GO" id="GO:0008701">
    <property type="term" value="F:4-hydroxy-2-oxovalerate aldolase activity"/>
    <property type="evidence" value="ECO:0007669"/>
    <property type="project" value="UniProtKB-UniRule"/>
</dbReference>
<dbReference type="GO" id="GO:0030145">
    <property type="term" value="F:manganese ion binding"/>
    <property type="evidence" value="ECO:0007669"/>
    <property type="project" value="UniProtKB-UniRule"/>
</dbReference>
<dbReference type="GO" id="GO:0009056">
    <property type="term" value="P:catabolic process"/>
    <property type="evidence" value="ECO:0007669"/>
    <property type="project" value="UniProtKB-KW"/>
</dbReference>
<dbReference type="GO" id="GO:0009098">
    <property type="term" value="P:L-leucine biosynthetic process"/>
    <property type="evidence" value="ECO:0007669"/>
    <property type="project" value="TreeGrafter"/>
</dbReference>
<dbReference type="CDD" id="cd07943">
    <property type="entry name" value="DRE_TIM_HOA"/>
    <property type="match status" value="1"/>
</dbReference>
<dbReference type="Gene3D" id="1.10.8.60">
    <property type="match status" value="1"/>
</dbReference>
<dbReference type="Gene3D" id="3.20.20.70">
    <property type="entry name" value="Aldolase class I"/>
    <property type="match status" value="1"/>
</dbReference>
<dbReference type="HAMAP" id="MF_01656">
    <property type="entry name" value="HOA"/>
    <property type="match status" value="1"/>
</dbReference>
<dbReference type="InterPro" id="IPR050073">
    <property type="entry name" value="2-IPM_HCS-like"/>
</dbReference>
<dbReference type="InterPro" id="IPR017629">
    <property type="entry name" value="4OH_2_O-val_aldolase"/>
</dbReference>
<dbReference type="InterPro" id="IPR013785">
    <property type="entry name" value="Aldolase_TIM"/>
</dbReference>
<dbReference type="InterPro" id="IPR012425">
    <property type="entry name" value="DmpG_comm"/>
</dbReference>
<dbReference type="InterPro" id="IPR035685">
    <property type="entry name" value="DRE_TIM_HOA"/>
</dbReference>
<dbReference type="InterPro" id="IPR000891">
    <property type="entry name" value="PYR_CT"/>
</dbReference>
<dbReference type="NCBIfam" id="TIGR03217">
    <property type="entry name" value="4OH_2_O_val_ald"/>
    <property type="match status" value="1"/>
</dbReference>
<dbReference type="NCBIfam" id="NF006049">
    <property type="entry name" value="PRK08195.1"/>
    <property type="match status" value="1"/>
</dbReference>
<dbReference type="PANTHER" id="PTHR10277:SF9">
    <property type="entry name" value="2-ISOPROPYLMALATE SYNTHASE 1, CHLOROPLASTIC-RELATED"/>
    <property type="match status" value="1"/>
</dbReference>
<dbReference type="PANTHER" id="PTHR10277">
    <property type="entry name" value="HOMOCITRATE SYNTHASE-RELATED"/>
    <property type="match status" value="1"/>
</dbReference>
<dbReference type="Pfam" id="PF07836">
    <property type="entry name" value="DmpG_comm"/>
    <property type="match status" value="1"/>
</dbReference>
<dbReference type="Pfam" id="PF00682">
    <property type="entry name" value="HMGL-like"/>
    <property type="match status" value="1"/>
</dbReference>
<dbReference type="SUPFAM" id="SSF51569">
    <property type="entry name" value="Aldolase"/>
    <property type="match status" value="1"/>
</dbReference>
<dbReference type="SUPFAM" id="SSF89000">
    <property type="entry name" value="post-HMGL domain-like"/>
    <property type="match status" value="1"/>
</dbReference>
<dbReference type="PROSITE" id="PS50991">
    <property type="entry name" value="PYR_CT"/>
    <property type="match status" value="1"/>
</dbReference>
<protein>
    <recommendedName>
        <fullName evidence="1">4-hydroxy-2-oxovalerate aldolase 7</fullName>
        <shortName evidence="1">HOA 7</shortName>
        <ecNumber evidence="1">4.1.3.39</ecNumber>
    </recommendedName>
    <alternativeName>
        <fullName evidence="1">4-hydroxy-2-keto-pentanoic acid aldolase 7</fullName>
    </alternativeName>
    <alternativeName>
        <fullName evidence="1">4-hydroxy-2-oxopentanoate aldolase 7</fullName>
    </alternativeName>
</protein>
<comment type="catalytic activity">
    <reaction evidence="1">
        <text>(S)-4-hydroxy-2-oxopentanoate = acetaldehyde + pyruvate</text>
        <dbReference type="Rhea" id="RHEA:22624"/>
        <dbReference type="ChEBI" id="CHEBI:15343"/>
        <dbReference type="ChEBI" id="CHEBI:15361"/>
        <dbReference type="ChEBI" id="CHEBI:73143"/>
        <dbReference type="EC" id="4.1.3.39"/>
    </reaction>
</comment>
<comment type="similarity">
    <text evidence="1">Belongs to the 4-hydroxy-2-oxovalerate aldolase family.</text>
</comment>
<proteinExistence type="inferred from homology"/>